<feature type="chain" id="PRO_0000462018" description="Nucleoprotein">
    <location>
        <begin position="1"/>
        <end position="549"/>
    </location>
</feature>
<feature type="region of interest" description="Disordered" evidence="4">
    <location>
        <begin position="437"/>
        <end position="469"/>
    </location>
</feature>
<feature type="region of interest" description="Disordered" evidence="4">
    <location>
        <begin position="517"/>
        <end position="549"/>
    </location>
</feature>
<feature type="compositionally biased region" description="Acidic residues" evidence="4">
    <location>
        <begin position="437"/>
        <end position="447"/>
    </location>
</feature>
<feature type="compositionally biased region" description="Polar residues" evidence="4">
    <location>
        <begin position="531"/>
        <end position="549"/>
    </location>
</feature>
<feature type="modified residue" description="Phosphoserine" evidence="3">
    <location>
        <position position="439"/>
    </location>
</feature>
<accession>Q5SC49</accession>
<name>NCAP_MUMPZ</name>
<organism>
    <name type="scientific">Mumps virus genotype N (strain L-Zagreb vaccine)</name>
    <name type="common">MuV</name>
    <dbReference type="NCBI Taxonomy" id="301186"/>
    <lineage>
        <taxon>Viruses</taxon>
        <taxon>Riboviria</taxon>
        <taxon>Orthornavirae</taxon>
        <taxon>Negarnaviricota</taxon>
        <taxon>Haploviricotina</taxon>
        <taxon>Monjiviricetes</taxon>
        <taxon>Mononegavirales</taxon>
        <taxon>Paramyxoviridae</taxon>
        <taxon>Rubulavirinae</taxon>
        <taxon>Orthorubulavirus</taxon>
        <taxon>Orthorubulavirus parotitidis</taxon>
        <taxon>Mumps orthorubulavirus</taxon>
    </lineage>
</organism>
<gene>
    <name type="primary">N</name>
    <name type="synonym">NP</name>
</gene>
<reference key="1">
    <citation type="journal article" date="2005" name="Virus Res.">
        <title>Genetic characterization of L-Zagreb mumps vaccine strain.</title>
        <authorList>
            <person name="Ivancic J."/>
            <person name="Kosutic Gulija T."/>
            <person name="Forcic D."/>
            <person name="Baricevic M."/>
            <person name="Jug R."/>
            <person name="Mesko-Prejac M."/>
            <person name="Mazuran R."/>
        </authorList>
    </citation>
    <scope>NUCLEOTIDE SEQUENCE [GENOMIC RNA]</scope>
    <source>
        <strain>L-Zagreb vaccine</strain>
    </source>
</reference>
<reference key="2">
    <citation type="submission" date="2005-04" db="EMBL/GenBank/DDBJ databases">
        <title>Mumps virus NP gene L.Zagreb vaccine strain, Serum Institute of India Ltd, Pune, India.</title>
        <authorList>
            <person name="Mallya A.D."/>
            <person name="Deobagkar D.D."/>
            <person name="Kumar M."/>
            <person name="Reddy N.M."/>
            <person name="Dhere R.M."/>
            <person name="Kapre S.V."/>
        </authorList>
    </citation>
    <scope>NUCLEOTIDE SEQUENCE [GENOMIC RNA]</scope>
    <source>
        <strain>L-Zagreb vaccine</strain>
    </source>
</reference>
<reference key="3">
    <citation type="journal article" date="2016" name="Virol. J.">
        <title>Identification of mumps virus protein and lipid composition by mass spectrometry.</title>
        <authorList>
            <person name="Brgles M."/>
            <person name="Bonta M."/>
            <person name="Santak M."/>
            <person name="Jagusic M."/>
            <person name="Forcic D."/>
            <person name="Halassy B."/>
            <person name="Allmaier G."/>
            <person name="Marchetti-Deschmann M."/>
        </authorList>
    </citation>
    <scope>IDENTIFICATION BY MASS SPECTROMETRY</scope>
    <scope>SUBCELLULAR LOCATION</scope>
    <source>
        <strain>L-Zagreb vaccine</strain>
    </source>
</reference>
<reference key="4">
    <citation type="journal article" date="2018" name="Virol. J.">
        <title>Mass spectrometry-based investigation of measles and mumps virus proteome.</title>
        <authorList>
            <person name="Sviben D."/>
            <person name="Forcic D."/>
            <person name="Halassy B."/>
            <person name="Allmaier G."/>
            <person name="Marchetti-Deschmann M."/>
            <person name="Brgles M."/>
        </authorList>
    </citation>
    <scope>IDENTIFICATION BY MASS SPECTROMETRY</scope>
    <scope>SUBCELLULAR LOCATION</scope>
    <source>
        <strain>L-Zagreb vaccine</strain>
    </source>
</reference>
<organismHost>
    <name type="scientific">Homo sapiens</name>
    <name type="common">Human</name>
    <dbReference type="NCBI Taxonomy" id="9606"/>
</organismHost>
<evidence type="ECO:0000250" key="1">
    <source>
        <dbReference type="UniProtKB" id="D5LWW7"/>
    </source>
</evidence>
<evidence type="ECO:0000250" key="2">
    <source>
        <dbReference type="UniProtKB" id="P06159"/>
    </source>
</evidence>
<evidence type="ECO:0000250" key="3">
    <source>
        <dbReference type="UniProtKB" id="Q9DQA5"/>
    </source>
</evidence>
<evidence type="ECO:0000256" key="4">
    <source>
        <dbReference type="SAM" id="MobiDB-lite"/>
    </source>
</evidence>
<evidence type="ECO:0000269" key="5">
    <source>
    </source>
</evidence>
<evidence type="ECO:0000269" key="6">
    <source>
    </source>
</evidence>
<evidence type="ECO:0000305" key="7"/>
<sequence length="549" mass="61336">MSSVLKAFERFTIEQELQDRGEEGSIPPETLKSAVKVFVINTPNPTTRYQMLNFCLRIICSQNARASHRVGALITLFSLPSAGMQNHIRLADRSPEAQIERCEIDGFEPGTYRLIPNARANLTANEIAAYALLADDLPPTINNGTPYVHADVEGQPCDEIEQFLDRCYSVLIQAWVMVCKCMTAYDQPAGSADRRFAKYQQQGRLEARYMLQPEAQRLIQTAIRKSLVVRQYLTFELQLARRQGLLSNRYYAMVGDIGKYIENSGLTAFFLTLKYALGTKWSPLSLAAFTGELTKLRSLMMLYRGLGEQARYLALLEAPQIMDFAPGGYPLIFSYAMGVGTVLDVQMRNYTYARPFLNGYYFQIGVETARRQQGTVDNRVADDLGLTPEQRTEVTQLVDRLARGRGAGIPGGPVNPFVPPVQQQQPAAVYEDIPALEESDDDGDEDGGAGFQHGAQAPAVRQGGQNDFRAQPLQDPIQAQLFMPLYPQVSNIPNHQNHQINRIGGMEHQDLLRYNENGDSQQDARGEHGNTFPNNPNQNAQSQVGDWDE</sequence>
<comment type="function">
    <text evidence="1 2">Forms the helical nucleocapsid (NC) with 12.71 N subunits per helical turn and a rise of 5.3 Angstrom per N subunit, protecting the genome from nucleases (By similarity). The encapsidated genomic RNA serves as template for transcription and replication; encapsidation by N is coupled to RNA synthesis (By similarity). Forms the encapsidation complex with the phosphoprotein protein P (By similarity). Before encapsidation, the newly synthesized free N protein, so-called N0, is chaperoned by P (By similarity).</text>
</comment>
<comment type="subunit">
    <text evidence="1 2 3">Homomultimer; forms the nucleocapsid (By similarity). Binds to the viral genomic RNA (By similarity). N0 interacts with the phosphoprotein (via N-terminus); this interaction allows P to chaperon N0 to avoid N polymerization before encapsidation (By similarity). Interacts (via N-terminus) as N-RNA template with the phosphoprotein (via C-terminus); this interaction positions the polymerase on the template (By similarity).</text>
</comment>
<comment type="subcellular location">
    <subcellularLocation>
        <location evidence="5 6">Virion</location>
    </subcellularLocation>
    <subcellularLocation>
        <location evidence="1">Host cytoplasm</location>
    </subcellularLocation>
    <text evidence="1">Found in cytoplasmic viral factories.</text>
</comment>
<comment type="domain">
    <text evidence="2">Ncore is globular and carries the regions required for self-assembly and RNA-binding. Ntail is an intrinsically disordered monomeric domain in the C-terminus.</text>
</comment>
<comment type="similarity">
    <text evidence="7">Belongs to the paramyxoviruses nucleocapsid family.</text>
</comment>
<proteinExistence type="evidence at protein level"/>
<keyword id="KW-0167">Capsid protein</keyword>
<keyword id="KW-1139">Helical capsid protein</keyword>
<keyword id="KW-1035">Host cytoplasm</keyword>
<keyword id="KW-0597">Phosphoprotein</keyword>
<keyword id="KW-0687">Ribonucleoprotein</keyword>
<keyword id="KW-0694">RNA-binding</keyword>
<keyword id="KW-0543">Viral nucleoprotein</keyword>
<keyword id="KW-0946">Virion</keyword>
<dbReference type="EMBL" id="AY685920">
    <property type="protein sequence ID" value="AAV65056.1"/>
    <property type="molecule type" value="Genomic_RNA"/>
</dbReference>
<dbReference type="EMBL" id="AY685921">
    <property type="protein sequence ID" value="AAV65065.1"/>
    <property type="molecule type" value="Genomic_RNA"/>
</dbReference>
<dbReference type="EMBL" id="AJ937822">
    <property type="protein sequence ID" value="CAI78900.1"/>
    <property type="molecule type" value="Genomic_RNA"/>
</dbReference>
<dbReference type="SMR" id="Q5SC49"/>
<dbReference type="Proteomes" id="UP000130023">
    <property type="component" value="Genome"/>
</dbReference>
<dbReference type="Proteomes" id="UP000181577">
    <property type="component" value="Genome"/>
</dbReference>
<dbReference type="GO" id="GO:0019029">
    <property type="term" value="C:helical viral capsid"/>
    <property type="evidence" value="ECO:0007669"/>
    <property type="project" value="UniProtKB-KW"/>
</dbReference>
<dbReference type="GO" id="GO:0030430">
    <property type="term" value="C:host cell cytoplasm"/>
    <property type="evidence" value="ECO:0007669"/>
    <property type="project" value="UniProtKB-SubCell"/>
</dbReference>
<dbReference type="GO" id="GO:1990904">
    <property type="term" value="C:ribonucleoprotein complex"/>
    <property type="evidence" value="ECO:0007669"/>
    <property type="project" value="UniProtKB-KW"/>
</dbReference>
<dbReference type="GO" id="GO:0019013">
    <property type="term" value="C:viral nucleocapsid"/>
    <property type="evidence" value="ECO:0007669"/>
    <property type="project" value="UniProtKB-KW"/>
</dbReference>
<dbReference type="GO" id="GO:0003723">
    <property type="term" value="F:RNA binding"/>
    <property type="evidence" value="ECO:0007669"/>
    <property type="project" value="UniProtKB-KW"/>
</dbReference>
<dbReference type="GO" id="GO:0005198">
    <property type="term" value="F:structural molecule activity"/>
    <property type="evidence" value="ECO:0007669"/>
    <property type="project" value="InterPro"/>
</dbReference>
<dbReference type="InterPro" id="IPR002021">
    <property type="entry name" value="Paramyx_ncap"/>
</dbReference>
<dbReference type="Pfam" id="PF00973">
    <property type="entry name" value="Paramyxo_ncap"/>
    <property type="match status" value="1"/>
</dbReference>
<protein>
    <recommendedName>
        <fullName>Nucleoprotein</fullName>
    </recommendedName>
    <alternativeName>
        <fullName>Nucleocapsid protein</fullName>
        <shortName>NP</shortName>
        <shortName>Protein N</shortName>
    </alternativeName>
</protein>